<gene>
    <name type="ordered locus">At3g03100</name>
    <name type="ORF">T17B22.21</name>
</gene>
<protein>
    <recommendedName>
        <fullName>Probable NADH dehydrogenase [ubiquinone] 1 alpha subcomplex subunit 12</fullName>
    </recommendedName>
</protein>
<reference key="1">
    <citation type="journal article" date="2000" name="Nature">
        <title>Sequence and analysis of chromosome 3 of the plant Arabidopsis thaliana.</title>
        <authorList>
            <person name="Salanoubat M."/>
            <person name="Lemcke K."/>
            <person name="Rieger M."/>
            <person name="Ansorge W."/>
            <person name="Unseld M."/>
            <person name="Fartmann B."/>
            <person name="Valle G."/>
            <person name="Bloecker H."/>
            <person name="Perez-Alonso M."/>
            <person name="Obermaier B."/>
            <person name="Delseny M."/>
            <person name="Boutry M."/>
            <person name="Grivell L.A."/>
            <person name="Mache R."/>
            <person name="Puigdomenech P."/>
            <person name="De Simone V."/>
            <person name="Choisne N."/>
            <person name="Artiguenave F."/>
            <person name="Robert C."/>
            <person name="Brottier P."/>
            <person name="Wincker P."/>
            <person name="Cattolico L."/>
            <person name="Weissenbach J."/>
            <person name="Saurin W."/>
            <person name="Quetier F."/>
            <person name="Schaefer M."/>
            <person name="Mueller-Auer S."/>
            <person name="Gabel C."/>
            <person name="Fuchs M."/>
            <person name="Benes V."/>
            <person name="Wurmbach E."/>
            <person name="Drzonek H."/>
            <person name="Erfle H."/>
            <person name="Jordan N."/>
            <person name="Bangert S."/>
            <person name="Wiedelmann R."/>
            <person name="Kranz H."/>
            <person name="Voss H."/>
            <person name="Holland R."/>
            <person name="Brandt P."/>
            <person name="Nyakatura G."/>
            <person name="Vezzi A."/>
            <person name="D'Angelo M."/>
            <person name="Pallavicini A."/>
            <person name="Toppo S."/>
            <person name="Simionati B."/>
            <person name="Conrad A."/>
            <person name="Hornischer K."/>
            <person name="Kauer G."/>
            <person name="Loehnert T.-H."/>
            <person name="Nordsiek G."/>
            <person name="Reichelt J."/>
            <person name="Scharfe M."/>
            <person name="Schoen O."/>
            <person name="Bargues M."/>
            <person name="Terol J."/>
            <person name="Climent J."/>
            <person name="Navarro P."/>
            <person name="Collado C."/>
            <person name="Perez-Perez A."/>
            <person name="Ottenwaelder B."/>
            <person name="Duchemin D."/>
            <person name="Cooke R."/>
            <person name="Laudie M."/>
            <person name="Berger-Llauro C."/>
            <person name="Purnelle B."/>
            <person name="Masuy D."/>
            <person name="de Haan M."/>
            <person name="Maarse A.C."/>
            <person name="Alcaraz J.-P."/>
            <person name="Cottet A."/>
            <person name="Casacuberta E."/>
            <person name="Monfort A."/>
            <person name="Argiriou A."/>
            <person name="Flores M."/>
            <person name="Liguori R."/>
            <person name="Vitale D."/>
            <person name="Mannhaupt G."/>
            <person name="Haase D."/>
            <person name="Schoof H."/>
            <person name="Rudd S."/>
            <person name="Zaccaria P."/>
            <person name="Mewes H.-W."/>
            <person name="Mayer K.F.X."/>
            <person name="Kaul S."/>
            <person name="Town C.D."/>
            <person name="Koo H.L."/>
            <person name="Tallon L.J."/>
            <person name="Jenkins J."/>
            <person name="Rooney T."/>
            <person name="Rizzo M."/>
            <person name="Walts A."/>
            <person name="Utterback T."/>
            <person name="Fujii C.Y."/>
            <person name="Shea T.P."/>
            <person name="Creasy T.H."/>
            <person name="Haas B."/>
            <person name="Maiti R."/>
            <person name="Wu D."/>
            <person name="Peterson J."/>
            <person name="Van Aken S."/>
            <person name="Pai G."/>
            <person name="Militscher J."/>
            <person name="Sellers P."/>
            <person name="Gill J.E."/>
            <person name="Feldblyum T.V."/>
            <person name="Preuss D."/>
            <person name="Lin X."/>
            <person name="Nierman W.C."/>
            <person name="Salzberg S.L."/>
            <person name="White O."/>
            <person name="Venter J.C."/>
            <person name="Fraser C.M."/>
            <person name="Kaneko T."/>
            <person name="Nakamura Y."/>
            <person name="Sato S."/>
            <person name="Kato T."/>
            <person name="Asamizu E."/>
            <person name="Sasamoto S."/>
            <person name="Kimura T."/>
            <person name="Idesawa K."/>
            <person name="Kawashima K."/>
            <person name="Kishida Y."/>
            <person name="Kiyokawa C."/>
            <person name="Kohara M."/>
            <person name="Matsumoto M."/>
            <person name="Matsuno A."/>
            <person name="Muraki A."/>
            <person name="Nakayama S."/>
            <person name="Nakazaki N."/>
            <person name="Shinpo S."/>
            <person name="Takeuchi C."/>
            <person name="Wada T."/>
            <person name="Watanabe A."/>
            <person name="Yamada M."/>
            <person name="Yasuda M."/>
            <person name="Tabata S."/>
        </authorList>
    </citation>
    <scope>NUCLEOTIDE SEQUENCE [LARGE SCALE GENOMIC DNA]</scope>
    <source>
        <strain>cv. Columbia</strain>
    </source>
</reference>
<reference key="2">
    <citation type="journal article" date="2017" name="Plant J.">
        <title>Araport11: a complete reannotation of the Arabidopsis thaliana reference genome.</title>
        <authorList>
            <person name="Cheng C.Y."/>
            <person name="Krishnakumar V."/>
            <person name="Chan A.P."/>
            <person name="Thibaud-Nissen F."/>
            <person name="Schobel S."/>
            <person name="Town C.D."/>
        </authorList>
    </citation>
    <scope>GENOME REANNOTATION</scope>
    <source>
        <strain>cv. Columbia</strain>
    </source>
</reference>
<reference key="3">
    <citation type="journal article" date="2003" name="Science">
        <title>Empirical analysis of transcriptional activity in the Arabidopsis genome.</title>
        <authorList>
            <person name="Yamada K."/>
            <person name="Lim J."/>
            <person name="Dale J.M."/>
            <person name="Chen H."/>
            <person name="Shinn P."/>
            <person name="Palm C.J."/>
            <person name="Southwick A.M."/>
            <person name="Wu H.C."/>
            <person name="Kim C.J."/>
            <person name="Nguyen M."/>
            <person name="Pham P.K."/>
            <person name="Cheuk R.F."/>
            <person name="Karlin-Newmann G."/>
            <person name="Liu S.X."/>
            <person name="Lam B."/>
            <person name="Sakano H."/>
            <person name="Wu T."/>
            <person name="Yu G."/>
            <person name="Miranda M."/>
            <person name="Quach H.L."/>
            <person name="Tripp M."/>
            <person name="Chang C.H."/>
            <person name="Lee J.M."/>
            <person name="Toriumi M.J."/>
            <person name="Chan M.M."/>
            <person name="Tang C.C."/>
            <person name="Onodera C.S."/>
            <person name="Deng J.M."/>
            <person name="Akiyama K."/>
            <person name="Ansari Y."/>
            <person name="Arakawa T."/>
            <person name="Banh J."/>
            <person name="Banno F."/>
            <person name="Bowser L."/>
            <person name="Brooks S.Y."/>
            <person name="Carninci P."/>
            <person name="Chao Q."/>
            <person name="Choy N."/>
            <person name="Enju A."/>
            <person name="Goldsmith A.D."/>
            <person name="Gurjal M."/>
            <person name="Hansen N.F."/>
            <person name="Hayashizaki Y."/>
            <person name="Johnson-Hopson C."/>
            <person name="Hsuan V.W."/>
            <person name="Iida K."/>
            <person name="Karnes M."/>
            <person name="Khan S."/>
            <person name="Koesema E."/>
            <person name="Ishida J."/>
            <person name="Jiang P.X."/>
            <person name="Jones T."/>
            <person name="Kawai J."/>
            <person name="Kamiya A."/>
            <person name="Meyers C."/>
            <person name="Nakajima M."/>
            <person name="Narusaka M."/>
            <person name="Seki M."/>
            <person name="Sakurai T."/>
            <person name="Satou M."/>
            <person name="Tamse R."/>
            <person name="Vaysberg M."/>
            <person name="Wallender E.K."/>
            <person name="Wong C."/>
            <person name="Yamamura Y."/>
            <person name="Yuan S."/>
            <person name="Shinozaki K."/>
            <person name="Davis R.W."/>
            <person name="Theologis A."/>
            <person name="Ecker J.R."/>
        </authorList>
    </citation>
    <scope>NUCLEOTIDE SEQUENCE [LARGE SCALE MRNA]</scope>
    <source>
        <strain>cv. Columbia</strain>
    </source>
</reference>
<reference key="4">
    <citation type="submission" date="2002-03" db="EMBL/GenBank/DDBJ databases">
        <title>Full-length cDNA from Arabidopsis thaliana.</title>
        <authorList>
            <person name="Brover V.V."/>
            <person name="Troukhan M.E."/>
            <person name="Alexandrov N.A."/>
            <person name="Lu Y.-P."/>
            <person name="Flavell R.B."/>
            <person name="Feldmann K.A."/>
        </authorList>
    </citation>
    <scope>NUCLEOTIDE SEQUENCE [LARGE SCALE MRNA]</scope>
</reference>
<reference key="5">
    <citation type="journal article" date="2001" name="Plant Physiol.">
        <title>Proteomic approach to identify novel mitochondrial proteins in Arabidopsis.</title>
        <authorList>
            <person name="Kruft V."/>
            <person name="Eubel H."/>
            <person name="Jaensch L."/>
            <person name="Werhahn W."/>
            <person name="Braun H.-P."/>
        </authorList>
    </citation>
    <scope>PROTEIN SEQUENCE OF 33-43</scope>
    <source>
        <tissue>Leaf</tissue>
        <tissue>Stem</tissue>
    </source>
</reference>
<reference key="6">
    <citation type="journal article" date="2004" name="Plant Cell">
        <title>Experimental analysis of the Arabidopsis mitochondrial proteome highlights signaling and regulatory components, provides assessment of targeting prediction programs, and indicates plant-specific mitochondrial proteins.</title>
        <authorList>
            <person name="Heazlewood J.L."/>
            <person name="Tonti-Filippini J.S."/>
            <person name="Gout A.M."/>
            <person name="Day D.A."/>
            <person name="Whelan J."/>
            <person name="Millar A.H."/>
        </authorList>
    </citation>
    <scope>IDENTIFICATION BY MASS SPECTROMETRY</scope>
    <scope>SUBCELLULAR LOCATION [LARGE SCALE ANALYSIS]</scope>
    <source>
        <strain>cv. Landsberg erecta</strain>
    </source>
</reference>
<accession>Q9M9M9</accession>
<comment type="function">
    <text evidence="1">Accessory subunit of the mitochondrial membrane respiratory chain NADH dehydrogenase (Complex I), that is believed not to be involved in catalysis. Complex I functions in the transfer of electrons from NADH to the respiratory chain. The immediate electron acceptor for the enzyme is believed to be ubiquinone (By similarity).</text>
</comment>
<comment type="subunit">
    <text>Complex I is composed of at least 49 different subunits.</text>
</comment>
<comment type="subcellular location">
    <subcellularLocation>
        <location evidence="1">Mitochondrion inner membrane</location>
        <topology evidence="1">Peripheral membrane protein</topology>
        <orientation evidence="1">Matrix side</orientation>
    </subcellularLocation>
</comment>
<comment type="alternative products">
    <event type="alternative splicing"/>
    <isoform>
        <id>Q9M9M9-1</id>
        <name>1</name>
        <sequence type="displayed"/>
    </isoform>
    <text>A number of isoforms are produced. According to EST sequences.</text>
</comment>
<comment type="similarity">
    <text evidence="2">Belongs to the complex I NDUFA12 subunit family.</text>
</comment>
<proteinExistence type="evidence at protein level"/>
<sequence>MALTVAKSALEAIREKGLGGFMRMIREEGFMRCLPDGNLLQTKIHNIGATLVGVDKFGNKYYQKLGDTQYGRHRWVEYASKDRYNASQVPAEWHGWLHFITDHTGDELLSLKPKRYGLEHKENFSGEGDAYIYHSKGHTLNPGQKNWTRYQSWVPTKTQ</sequence>
<feature type="chain" id="PRO_0000118848" description="Probable NADH dehydrogenase [ubiquinone] 1 alpha subcomplex subunit 12">
    <location>
        <begin position="1"/>
        <end position="159"/>
    </location>
</feature>
<feature type="turn" evidence="4">
    <location>
        <begin position="32"/>
        <end position="35"/>
    </location>
</feature>
<feature type="helix" evidence="4">
    <location>
        <begin position="37"/>
        <end position="45"/>
    </location>
</feature>
<feature type="turn" evidence="4">
    <location>
        <begin position="46"/>
        <end position="48"/>
    </location>
</feature>
<feature type="strand" evidence="4">
    <location>
        <begin position="50"/>
        <end position="54"/>
    </location>
</feature>
<feature type="strand" evidence="4">
    <location>
        <begin position="60"/>
        <end position="63"/>
    </location>
</feature>
<feature type="strand" evidence="3">
    <location>
        <begin position="67"/>
        <end position="69"/>
    </location>
</feature>
<feature type="strand" evidence="4">
    <location>
        <begin position="74"/>
        <end position="77"/>
    </location>
</feature>
<feature type="strand" evidence="4">
    <location>
        <begin position="81"/>
        <end position="83"/>
    </location>
</feature>
<feature type="helix" evidence="4">
    <location>
        <begin position="86"/>
        <end position="88"/>
    </location>
</feature>
<feature type="helix" evidence="4">
    <location>
        <begin position="91"/>
        <end position="97"/>
    </location>
</feature>
<feature type="helix" evidence="4">
    <location>
        <begin position="105"/>
        <end position="109"/>
    </location>
</feature>
<dbReference type="EMBL" id="AC012328">
    <property type="protein sequence ID" value="AAF26114.1"/>
    <property type="molecule type" value="Genomic_DNA"/>
</dbReference>
<dbReference type="EMBL" id="CP002686">
    <property type="protein sequence ID" value="AEE73901.1"/>
    <property type="molecule type" value="Genomic_DNA"/>
</dbReference>
<dbReference type="EMBL" id="AF370349">
    <property type="protein sequence ID" value="AAK44164.1"/>
    <property type="molecule type" value="mRNA"/>
</dbReference>
<dbReference type="EMBL" id="AY062979">
    <property type="protein sequence ID" value="AAL34153.1"/>
    <property type="molecule type" value="mRNA"/>
</dbReference>
<dbReference type="EMBL" id="AY087701">
    <property type="protein sequence ID" value="AAM65238.1"/>
    <property type="molecule type" value="mRNA"/>
</dbReference>
<dbReference type="RefSeq" id="NP_566192.1">
    <molecule id="Q9M9M9-1"/>
    <property type="nucleotide sequence ID" value="NM_111180.5"/>
</dbReference>
<dbReference type="PDB" id="7A23">
    <property type="method" value="EM"/>
    <property type="resolution" value="3.70 A"/>
    <property type="chains" value="U=1-159"/>
</dbReference>
<dbReference type="PDB" id="7A24">
    <property type="method" value="EM"/>
    <property type="resolution" value="3.80 A"/>
    <property type="chains" value="U=1-159"/>
</dbReference>
<dbReference type="PDB" id="7AQR">
    <property type="method" value="EM"/>
    <property type="resolution" value="2.91 A"/>
    <property type="chains" value="q=1-159"/>
</dbReference>
<dbReference type="PDB" id="7AR7">
    <property type="method" value="EM"/>
    <property type="resolution" value="3.72 A"/>
    <property type="chains" value="q=48-110"/>
</dbReference>
<dbReference type="PDB" id="7AR8">
    <property type="method" value="EM"/>
    <property type="resolution" value="3.53 A"/>
    <property type="chains" value="q=1-159"/>
</dbReference>
<dbReference type="PDB" id="7ARB">
    <property type="method" value="EM"/>
    <property type="resolution" value="3.41 A"/>
    <property type="chains" value="q=1-159"/>
</dbReference>
<dbReference type="PDB" id="8BEE">
    <property type="method" value="EM"/>
    <property type="resolution" value="2.04 A"/>
    <property type="chains" value="q=1-159"/>
</dbReference>
<dbReference type="PDB" id="8BPX">
    <property type="method" value="EM"/>
    <property type="resolution" value="2.09 A"/>
    <property type="chains" value="q=1-159"/>
</dbReference>
<dbReference type="PDB" id="8BQ5">
    <property type="method" value="EM"/>
    <property type="resolution" value="2.73 A"/>
    <property type="chains" value="q=1-159"/>
</dbReference>
<dbReference type="PDB" id="8BQ6">
    <property type="method" value="EM"/>
    <property type="resolution" value="2.80 A"/>
    <property type="chains" value="q=1-159"/>
</dbReference>
<dbReference type="PDBsum" id="7A23"/>
<dbReference type="PDBsum" id="7A24"/>
<dbReference type="PDBsum" id="7AQR"/>
<dbReference type="PDBsum" id="7AR7"/>
<dbReference type="PDBsum" id="7AR8"/>
<dbReference type="PDBsum" id="7ARB"/>
<dbReference type="PDBsum" id="8BEE"/>
<dbReference type="PDBsum" id="8BPX"/>
<dbReference type="PDBsum" id="8BQ5"/>
<dbReference type="PDBsum" id="8BQ6"/>
<dbReference type="EMDB" id="EMD-11873"/>
<dbReference type="EMDB" id="EMD-11875"/>
<dbReference type="EMDB" id="EMD-11876"/>
<dbReference type="EMDB" id="EMD-11878"/>
<dbReference type="EMDB" id="EMD-15999"/>
<dbReference type="EMDB" id="EMD-16168"/>
<dbReference type="EMDB" id="EMD-16171"/>
<dbReference type="EMDB" id="EMD-16172"/>
<dbReference type="SMR" id="Q9M9M9"/>
<dbReference type="BioGRID" id="6437">
    <property type="interactions" value="11"/>
</dbReference>
<dbReference type="FunCoup" id="Q9M9M9">
    <property type="interactions" value="3213"/>
</dbReference>
<dbReference type="IntAct" id="Q9M9M9">
    <property type="interactions" value="2"/>
</dbReference>
<dbReference type="STRING" id="3702.Q9M9M9"/>
<dbReference type="TCDB" id="3.D.1.6.3">
    <property type="family name" value="the h+ or na+-translocating nadh dehydrogenase (ndh) family"/>
</dbReference>
<dbReference type="SwissPalm" id="Q9M9M9"/>
<dbReference type="PaxDb" id="3702-AT3G03100.1"/>
<dbReference type="ProteomicsDB" id="251132">
    <molecule id="Q9M9M9-1"/>
</dbReference>
<dbReference type="DNASU" id="821104"/>
<dbReference type="EnsemblPlants" id="AT3G03100.1">
    <molecule id="Q9M9M9-1"/>
    <property type="protein sequence ID" value="AT3G03100.1"/>
    <property type="gene ID" value="AT3G03100"/>
</dbReference>
<dbReference type="GeneID" id="821104"/>
<dbReference type="Gramene" id="AT3G03100.1">
    <molecule id="Q9M9M9-1"/>
    <property type="protein sequence ID" value="AT3G03100.1"/>
    <property type="gene ID" value="AT3G03100"/>
</dbReference>
<dbReference type="KEGG" id="ath:AT3G03100"/>
<dbReference type="Araport" id="AT3G03100"/>
<dbReference type="TAIR" id="AT3G03100"/>
<dbReference type="eggNOG" id="KOG3382">
    <property type="taxonomic scope" value="Eukaryota"/>
</dbReference>
<dbReference type="HOGENOM" id="CLU_110455_0_0_1"/>
<dbReference type="InParanoid" id="Q9M9M9"/>
<dbReference type="OrthoDB" id="274641at2759"/>
<dbReference type="PhylomeDB" id="Q9M9M9"/>
<dbReference type="BioCyc" id="ARA:AT3G03100-MONOMER"/>
<dbReference type="BioCyc" id="MetaCyc:AT3G03100-MONOMER"/>
<dbReference type="PRO" id="PR:Q9M9M9"/>
<dbReference type="Proteomes" id="UP000006548">
    <property type="component" value="Chromosome 3"/>
</dbReference>
<dbReference type="ExpressionAtlas" id="Q9M9M9">
    <property type="expression patterns" value="baseline and differential"/>
</dbReference>
<dbReference type="GO" id="GO:0005829">
    <property type="term" value="C:cytosol"/>
    <property type="evidence" value="ECO:0007005"/>
    <property type="project" value="TAIR"/>
</dbReference>
<dbReference type="GO" id="GO:0005743">
    <property type="term" value="C:mitochondrial inner membrane"/>
    <property type="evidence" value="ECO:0007669"/>
    <property type="project" value="UniProtKB-SubCell"/>
</dbReference>
<dbReference type="GO" id="GO:0005739">
    <property type="term" value="C:mitochondrion"/>
    <property type="evidence" value="ECO:0007005"/>
    <property type="project" value="TAIR"/>
</dbReference>
<dbReference type="GO" id="GO:0045271">
    <property type="term" value="C:respiratory chain complex I"/>
    <property type="evidence" value="ECO:0007669"/>
    <property type="project" value="InterPro"/>
</dbReference>
<dbReference type="GO" id="GO:0050897">
    <property type="term" value="F:cobalt ion binding"/>
    <property type="evidence" value="ECO:0007005"/>
    <property type="project" value="TAIR"/>
</dbReference>
<dbReference type="InterPro" id="IPR007763">
    <property type="entry name" value="NDUFA12"/>
</dbReference>
<dbReference type="PANTHER" id="PTHR12910:SF2">
    <property type="entry name" value="NADH DEHYDROGENASE [UBIQUINONE] 1 ALPHA SUBCOMPLEX SUBUNIT 12"/>
    <property type="match status" value="1"/>
</dbReference>
<dbReference type="PANTHER" id="PTHR12910">
    <property type="entry name" value="NADH-UBIQUINONE OXIDOREDUCTASE SUBUNIT B17.2"/>
    <property type="match status" value="1"/>
</dbReference>
<dbReference type="Pfam" id="PF05071">
    <property type="entry name" value="NDUFA12"/>
    <property type="match status" value="1"/>
</dbReference>
<keyword id="KW-0002">3D-structure</keyword>
<keyword id="KW-0025">Alternative splicing</keyword>
<keyword id="KW-0903">Direct protein sequencing</keyword>
<keyword id="KW-0249">Electron transport</keyword>
<keyword id="KW-0472">Membrane</keyword>
<keyword id="KW-0496">Mitochondrion</keyword>
<keyword id="KW-0999">Mitochondrion inner membrane</keyword>
<keyword id="KW-1185">Reference proteome</keyword>
<keyword id="KW-0679">Respiratory chain</keyword>
<keyword id="KW-0813">Transport</keyword>
<organism>
    <name type="scientific">Arabidopsis thaliana</name>
    <name type="common">Mouse-ear cress</name>
    <dbReference type="NCBI Taxonomy" id="3702"/>
    <lineage>
        <taxon>Eukaryota</taxon>
        <taxon>Viridiplantae</taxon>
        <taxon>Streptophyta</taxon>
        <taxon>Embryophyta</taxon>
        <taxon>Tracheophyta</taxon>
        <taxon>Spermatophyta</taxon>
        <taxon>Magnoliopsida</taxon>
        <taxon>eudicotyledons</taxon>
        <taxon>Gunneridae</taxon>
        <taxon>Pentapetalae</taxon>
        <taxon>rosids</taxon>
        <taxon>malvids</taxon>
        <taxon>Brassicales</taxon>
        <taxon>Brassicaceae</taxon>
        <taxon>Camelineae</taxon>
        <taxon>Arabidopsis</taxon>
    </lineage>
</organism>
<evidence type="ECO:0000250" key="1"/>
<evidence type="ECO:0000305" key="2"/>
<evidence type="ECO:0007829" key="3">
    <source>
        <dbReference type="PDB" id="7ARB"/>
    </source>
</evidence>
<evidence type="ECO:0007829" key="4">
    <source>
        <dbReference type="PDB" id="8BEE"/>
    </source>
</evidence>
<name>NDUAC_ARATH</name>